<sequence>MENELLNHPHNNNMVNGHQDAPYDALSMKNDAEMLEQIKQLLMENNNLKETMKQMNQEMKERLEELLKRHNQHLLDLNSANEVLRKELQSLKEKIATSNQGSAVCSTSEEASENKQLKNQLTRLQAEKADLLGLISELQLKLGSFSEDSFVEIGFSERESGEIVNEEKANKILSDHNISYRTNSIKEEGGGTEPEEVAISRLLRSLREETQKVERLEKELFSANKRLAELEKQTSEFCDKGVQTEQESEQSQSEVIISSEVDILKEKVKSLNKELQETNDKLNEAKQFKNSLQEKCILLDKRLQENQVDLEEKQSLRYSIKKLELQVESQESEIKLEQNKTEAEKNQLGILQVSYDKLNSEYQELRIREIEKVSKVEFNELLEKLDVCEKALAKKQFEIDEMREMDTKHEEDKETIELLRAQVDVYCADFHAERSARENIHQEKEQLATRLAYMIQEYEKLKEEMMGKQSIEQLQRRHGATSLLDASEGPYLVARGAANMEQPSITVYTCPKCNLTVPDMDTLQIHVMDCIT</sequence>
<gene>
    <name type="primary">optn</name>
</gene>
<evidence type="ECO:0000250" key="1"/>
<evidence type="ECO:0000250" key="2">
    <source>
        <dbReference type="UniProtKB" id="Q96CV9"/>
    </source>
</evidence>
<evidence type="ECO:0000255" key="3"/>
<evidence type="ECO:0000255" key="4">
    <source>
        <dbReference type="PROSITE-ProRule" id="PRU01142"/>
    </source>
</evidence>
<accession>Q5M7B7</accession>
<keyword id="KW-0175">Coiled coil</keyword>
<keyword id="KW-0963">Cytoplasm</keyword>
<keyword id="KW-0968">Cytoplasmic vesicle</keyword>
<keyword id="KW-0967">Endosome</keyword>
<keyword id="KW-0333">Golgi apparatus</keyword>
<keyword id="KW-0479">Metal-binding</keyword>
<keyword id="KW-1185">Reference proteome</keyword>
<keyword id="KW-0862">Zinc</keyword>
<keyword id="KW-0863">Zinc-finger</keyword>
<organism>
    <name type="scientific">Xenopus laevis</name>
    <name type="common">African clawed frog</name>
    <dbReference type="NCBI Taxonomy" id="8355"/>
    <lineage>
        <taxon>Eukaryota</taxon>
        <taxon>Metazoa</taxon>
        <taxon>Chordata</taxon>
        <taxon>Craniata</taxon>
        <taxon>Vertebrata</taxon>
        <taxon>Euteleostomi</taxon>
        <taxon>Amphibia</taxon>
        <taxon>Batrachia</taxon>
        <taxon>Anura</taxon>
        <taxon>Pipoidea</taxon>
        <taxon>Pipidae</taxon>
        <taxon>Xenopodinae</taxon>
        <taxon>Xenopus</taxon>
        <taxon>Xenopus</taxon>
    </lineage>
</organism>
<protein>
    <recommendedName>
        <fullName>Optineurin</fullName>
    </recommendedName>
</protein>
<reference key="1">
    <citation type="submission" date="2004-12" db="EMBL/GenBank/DDBJ databases">
        <authorList>
            <consortium name="NIH - Xenopus Gene Collection (XGC) project"/>
        </authorList>
    </citation>
    <scope>NUCLEOTIDE SEQUENCE [LARGE SCALE MRNA]</scope>
    <source>
        <tissue>Testis</tissue>
    </source>
</reference>
<dbReference type="EMBL" id="BC088724">
    <property type="protein sequence ID" value="AAH88724.1"/>
    <property type="molecule type" value="mRNA"/>
</dbReference>
<dbReference type="RefSeq" id="NP_001088901.1">
    <property type="nucleotide sequence ID" value="NM_001095432.1"/>
</dbReference>
<dbReference type="SMR" id="Q5M7B7"/>
<dbReference type="DNASU" id="496250"/>
<dbReference type="GeneID" id="496250"/>
<dbReference type="KEGG" id="xla:496250"/>
<dbReference type="AGR" id="Xenbase:XB-GENE-943661"/>
<dbReference type="CTD" id="496250"/>
<dbReference type="Xenbase" id="XB-GENE-943661">
    <property type="gene designation" value="optn.L"/>
</dbReference>
<dbReference type="OrthoDB" id="6343844at2759"/>
<dbReference type="Proteomes" id="UP000186698">
    <property type="component" value="Chromosome 3L"/>
</dbReference>
<dbReference type="Bgee" id="496250">
    <property type="expression patterns" value="Expressed in zone of skin and 19 other cell types or tissues"/>
</dbReference>
<dbReference type="GO" id="GO:0005776">
    <property type="term" value="C:autophagosome"/>
    <property type="evidence" value="ECO:0007669"/>
    <property type="project" value="UniProtKB-SubCell"/>
</dbReference>
<dbReference type="GO" id="GO:0005737">
    <property type="term" value="C:cytoplasm"/>
    <property type="evidence" value="ECO:0000318"/>
    <property type="project" value="GO_Central"/>
</dbReference>
<dbReference type="GO" id="GO:0005794">
    <property type="term" value="C:Golgi apparatus"/>
    <property type="evidence" value="ECO:0000250"/>
    <property type="project" value="UniProtKB"/>
</dbReference>
<dbReference type="GO" id="GO:0005634">
    <property type="term" value="C:nucleus"/>
    <property type="evidence" value="ECO:0000318"/>
    <property type="project" value="GO_Central"/>
</dbReference>
<dbReference type="GO" id="GO:0048471">
    <property type="term" value="C:perinuclear region of cytoplasm"/>
    <property type="evidence" value="ECO:0007669"/>
    <property type="project" value="UniProtKB-SubCell"/>
</dbReference>
<dbReference type="GO" id="GO:0055037">
    <property type="term" value="C:recycling endosome"/>
    <property type="evidence" value="ECO:0007669"/>
    <property type="project" value="UniProtKB-SubCell"/>
</dbReference>
<dbReference type="GO" id="GO:0070530">
    <property type="term" value="F:K63-linked polyubiquitin modification-dependent protein binding"/>
    <property type="evidence" value="ECO:0000318"/>
    <property type="project" value="GO_Central"/>
</dbReference>
<dbReference type="GO" id="GO:0008270">
    <property type="term" value="F:zinc ion binding"/>
    <property type="evidence" value="ECO:0007669"/>
    <property type="project" value="UniProtKB-KW"/>
</dbReference>
<dbReference type="GO" id="GO:0090161">
    <property type="term" value="P:Golgi ribbon formation"/>
    <property type="evidence" value="ECO:0000318"/>
    <property type="project" value="GO_Central"/>
</dbReference>
<dbReference type="GO" id="GO:0034067">
    <property type="term" value="P:protein localization to Golgi apparatus"/>
    <property type="evidence" value="ECO:0000318"/>
    <property type="project" value="GO_Central"/>
</dbReference>
<dbReference type="GO" id="GO:0043122">
    <property type="term" value="P:regulation of canonical NF-kappaB signal transduction"/>
    <property type="evidence" value="ECO:0000318"/>
    <property type="project" value="GO_Central"/>
</dbReference>
<dbReference type="CDD" id="cd09803">
    <property type="entry name" value="UBAN"/>
    <property type="match status" value="1"/>
</dbReference>
<dbReference type="FunFam" id="1.20.5.990:FF:000009">
    <property type="entry name" value="Optineurin"/>
    <property type="match status" value="1"/>
</dbReference>
<dbReference type="Gene3D" id="1.20.5.390">
    <property type="entry name" value="L1 transposable element, trimerization domain"/>
    <property type="match status" value="2"/>
</dbReference>
<dbReference type="Gene3D" id="1.20.5.990">
    <property type="entry name" value="Nemo cc2-lz domain - 1d5 darpin complex"/>
    <property type="match status" value="1"/>
</dbReference>
<dbReference type="InterPro" id="IPR032419">
    <property type="entry name" value="CC2-LZ_dom"/>
</dbReference>
<dbReference type="InterPro" id="IPR021063">
    <property type="entry name" value="NEMO_N"/>
</dbReference>
<dbReference type="InterPro" id="IPR034735">
    <property type="entry name" value="NEMO_ZF"/>
</dbReference>
<dbReference type="InterPro" id="IPR051301">
    <property type="entry name" value="Optineurin/NFkB_EssMod"/>
</dbReference>
<dbReference type="PANTHER" id="PTHR31553">
    <property type="entry name" value="NF-KAPPA-B ESSENTIAL MODULATOR"/>
    <property type="match status" value="1"/>
</dbReference>
<dbReference type="PANTHER" id="PTHR31553:SF2">
    <property type="entry name" value="OPTINEURIN"/>
    <property type="match status" value="1"/>
</dbReference>
<dbReference type="Pfam" id="PF16516">
    <property type="entry name" value="CC2-LZ"/>
    <property type="match status" value="1"/>
</dbReference>
<dbReference type="Pfam" id="PF11577">
    <property type="entry name" value="NEMO"/>
    <property type="match status" value="1"/>
</dbReference>
<dbReference type="Pfam" id="PF18414">
    <property type="entry name" value="zf_C2H2_10"/>
    <property type="match status" value="1"/>
</dbReference>
<dbReference type="PROSITE" id="PS51801">
    <property type="entry name" value="ZF_CCHC_NOA"/>
    <property type="match status" value="1"/>
</dbReference>
<proteinExistence type="evidence at transcript level"/>
<feature type="chain" id="PRO_0000058073" description="Optineurin">
    <location>
        <begin position="1"/>
        <end position="532"/>
    </location>
</feature>
<feature type="zinc finger region" description="CCHC NOA-type" evidence="4">
    <location>
        <begin position="502"/>
        <end position="532"/>
    </location>
</feature>
<feature type="coiled-coil region" evidence="3">
    <location>
        <begin position="27"/>
        <end position="143"/>
    </location>
</feature>
<feature type="coiled-coil region" evidence="3">
    <location>
        <begin position="195"/>
        <end position="466"/>
    </location>
</feature>
<feature type="binding site" evidence="4">
    <location>
        <position position="510"/>
    </location>
    <ligand>
        <name>Zn(2+)</name>
        <dbReference type="ChEBI" id="CHEBI:29105"/>
    </ligand>
</feature>
<feature type="binding site" evidence="4">
    <location>
        <position position="513"/>
    </location>
    <ligand>
        <name>Zn(2+)</name>
        <dbReference type="ChEBI" id="CHEBI:29105"/>
    </ligand>
</feature>
<feature type="binding site" evidence="4">
    <location>
        <position position="526"/>
    </location>
    <ligand>
        <name>Zn(2+)</name>
        <dbReference type="ChEBI" id="CHEBI:29105"/>
    </ligand>
</feature>
<feature type="binding site" evidence="4">
    <location>
        <position position="530"/>
    </location>
    <ligand>
        <name>Zn(2+)</name>
        <dbReference type="ChEBI" id="CHEBI:29105"/>
    </ligand>
</feature>
<name>OPTN_XENLA</name>
<comment type="function">
    <text evidence="1 2">Probably part of the TNF-alpha signaling pathway that can shift the equilibrium toward induction of cell death. May act by regulating membrane trafficking and cellular morphogenesis.</text>
</comment>
<comment type="subcellular location">
    <subcellularLocation>
        <location evidence="1">Cytoplasm</location>
    </subcellularLocation>
    <subcellularLocation>
        <location evidence="1">Cytoplasm</location>
        <location evidence="1">Perinuclear region</location>
    </subcellularLocation>
    <subcellularLocation>
        <location evidence="2">Golgi apparatus</location>
    </subcellularLocation>
    <subcellularLocation>
        <location evidence="1">Golgi apparatus</location>
        <location evidence="1">trans-Golgi network</location>
    </subcellularLocation>
    <subcellularLocation>
        <location evidence="1">Cytoplasmic vesicle</location>
    </subcellularLocation>
    <subcellularLocation>
        <location evidence="1">Recycling endosome</location>
    </subcellularLocation>
    <subcellularLocation>
        <location evidence="1">Cytoplasmic vesicle</location>
        <location evidence="1">Autophagosome</location>
    </subcellularLocation>
</comment>